<sequence>MAKTPGPISLIEPLSGNSALLVKINAVYVVKRSRYQEIVVADTEDFGRALILDDYIQSSYYDEVYYHESLVHPAMSTHPSPADVLILGGGEGATLREVLKHRTVKRAVMVDIDGDVVEVARRYLPQMHQGAFDDPRAQVVIEDGFVYVERALAAGDKFDVVIMDLTDPYSSDIAKQLYAPGFFKKVRGLLREDGLVVTQAGNSFFFPEAYDMVLHGVRSSFPTVAEYSVWIPSFGYAVNYILGSLKYNPTALTPEEVDRRLRERGVQTHFYSGRTHLGLMSLPIHRKIRRV</sequence>
<evidence type="ECO:0000255" key="1">
    <source>
        <dbReference type="HAMAP-Rule" id="MF_00198"/>
    </source>
</evidence>
<gene>
    <name evidence="1" type="primary">speE</name>
    <name type="ordered locus">Tneu_0239</name>
</gene>
<protein>
    <recommendedName>
        <fullName evidence="1">Polyamine aminopropyltransferase</fullName>
    </recommendedName>
    <alternativeName>
        <fullName evidence="1">Putrescine aminopropyltransferase</fullName>
        <shortName evidence="1">PAPT</shortName>
    </alternativeName>
    <alternativeName>
        <fullName evidence="1">Spermidine synthase</fullName>
        <shortName evidence="1">SPDS</shortName>
        <shortName evidence="1">SPDSY</shortName>
        <ecNumber evidence="1">2.5.1.16</ecNumber>
    </alternativeName>
</protein>
<organism>
    <name type="scientific">Pyrobaculum neutrophilum (strain DSM 2338 / JCM 9278 / NBRC 100436 / V24Sta)</name>
    <name type="common">Thermoproteus neutrophilus</name>
    <dbReference type="NCBI Taxonomy" id="444157"/>
    <lineage>
        <taxon>Archaea</taxon>
        <taxon>Thermoproteota</taxon>
        <taxon>Thermoprotei</taxon>
        <taxon>Thermoproteales</taxon>
        <taxon>Thermoproteaceae</taxon>
        <taxon>Pyrobaculum</taxon>
    </lineage>
</organism>
<proteinExistence type="inferred from homology"/>
<keyword id="KW-0963">Cytoplasm</keyword>
<keyword id="KW-0620">Polyamine biosynthesis</keyword>
<keyword id="KW-0745">Spermidine biosynthesis</keyword>
<keyword id="KW-0808">Transferase</keyword>
<accession>B1YB61</accession>
<dbReference type="EC" id="2.5.1.16" evidence="1"/>
<dbReference type="EMBL" id="CP001014">
    <property type="protein sequence ID" value="ACB39192.1"/>
    <property type="molecule type" value="Genomic_DNA"/>
</dbReference>
<dbReference type="RefSeq" id="WP_012349613.1">
    <property type="nucleotide sequence ID" value="NC_010525.1"/>
</dbReference>
<dbReference type="SMR" id="B1YB61"/>
<dbReference type="STRING" id="444157.Tneu_0239"/>
<dbReference type="GeneID" id="6165876"/>
<dbReference type="KEGG" id="tne:Tneu_0239"/>
<dbReference type="eggNOG" id="arCOG00050">
    <property type="taxonomic scope" value="Archaea"/>
</dbReference>
<dbReference type="HOGENOM" id="CLU_048199_0_1_2"/>
<dbReference type="OrthoDB" id="10538at2157"/>
<dbReference type="UniPathway" id="UPA00248">
    <property type="reaction ID" value="UER00314"/>
</dbReference>
<dbReference type="Proteomes" id="UP000001694">
    <property type="component" value="Chromosome"/>
</dbReference>
<dbReference type="GO" id="GO:0005737">
    <property type="term" value="C:cytoplasm"/>
    <property type="evidence" value="ECO:0007669"/>
    <property type="project" value="UniProtKB-SubCell"/>
</dbReference>
<dbReference type="GO" id="GO:0004766">
    <property type="term" value="F:spermidine synthase activity"/>
    <property type="evidence" value="ECO:0007669"/>
    <property type="project" value="UniProtKB-UniRule"/>
</dbReference>
<dbReference type="GO" id="GO:0010487">
    <property type="term" value="F:thermospermine synthase activity"/>
    <property type="evidence" value="ECO:0007669"/>
    <property type="project" value="TreeGrafter"/>
</dbReference>
<dbReference type="GO" id="GO:0008295">
    <property type="term" value="P:spermidine biosynthetic process"/>
    <property type="evidence" value="ECO:0007669"/>
    <property type="project" value="UniProtKB-UniRule"/>
</dbReference>
<dbReference type="CDD" id="cd02440">
    <property type="entry name" value="AdoMet_MTases"/>
    <property type="match status" value="1"/>
</dbReference>
<dbReference type="FunFam" id="3.40.50.150:FF:000088">
    <property type="entry name" value="Polyamine aminopropyltransferase"/>
    <property type="match status" value="1"/>
</dbReference>
<dbReference type="Gene3D" id="2.30.140.10">
    <property type="entry name" value="Spermidine synthase, tetramerisation domain"/>
    <property type="match status" value="1"/>
</dbReference>
<dbReference type="Gene3D" id="3.40.50.150">
    <property type="entry name" value="Vaccinia Virus protein VP39"/>
    <property type="match status" value="1"/>
</dbReference>
<dbReference type="HAMAP" id="MF_00198">
    <property type="entry name" value="Spermidine_synth"/>
    <property type="match status" value="1"/>
</dbReference>
<dbReference type="InterPro" id="IPR030374">
    <property type="entry name" value="PABS"/>
</dbReference>
<dbReference type="InterPro" id="IPR030373">
    <property type="entry name" value="PABS_CS"/>
</dbReference>
<dbReference type="InterPro" id="IPR029063">
    <property type="entry name" value="SAM-dependent_MTases_sf"/>
</dbReference>
<dbReference type="InterPro" id="IPR001045">
    <property type="entry name" value="Spermi_synthase"/>
</dbReference>
<dbReference type="InterPro" id="IPR035246">
    <property type="entry name" value="Spermidine_synt_N"/>
</dbReference>
<dbReference type="InterPro" id="IPR037163">
    <property type="entry name" value="Spermidine_synt_N_sf"/>
</dbReference>
<dbReference type="PANTHER" id="PTHR43317">
    <property type="entry name" value="THERMOSPERMINE SYNTHASE ACAULIS5"/>
    <property type="match status" value="1"/>
</dbReference>
<dbReference type="PANTHER" id="PTHR43317:SF1">
    <property type="entry name" value="THERMOSPERMINE SYNTHASE ACAULIS5"/>
    <property type="match status" value="1"/>
</dbReference>
<dbReference type="Pfam" id="PF17284">
    <property type="entry name" value="Spermine_synt_N"/>
    <property type="match status" value="1"/>
</dbReference>
<dbReference type="Pfam" id="PF01564">
    <property type="entry name" value="Spermine_synth"/>
    <property type="match status" value="1"/>
</dbReference>
<dbReference type="SUPFAM" id="SSF53335">
    <property type="entry name" value="S-adenosyl-L-methionine-dependent methyltransferases"/>
    <property type="match status" value="1"/>
</dbReference>
<dbReference type="PROSITE" id="PS01330">
    <property type="entry name" value="PABS_1"/>
    <property type="match status" value="1"/>
</dbReference>
<dbReference type="PROSITE" id="PS51006">
    <property type="entry name" value="PABS_2"/>
    <property type="match status" value="1"/>
</dbReference>
<reference key="1">
    <citation type="submission" date="2008-03" db="EMBL/GenBank/DDBJ databases">
        <title>Complete sequence of Thermoproteus neutrophilus V24Sta.</title>
        <authorList>
            <consortium name="US DOE Joint Genome Institute"/>
            <person name="Copeland A."/>
            <person name="Lucas S."/>
            <person name="Lapidus A."/>
            <person name="Glavina del Rio T."/>
            <person name="Dalin E."/>
            <person name="Tice H."/>
            <person name="Bruce D."/>
            <person name="Goodwin L."/>
            <person name="Pitluck S."/>
            <person name="Sims D."/>
            <person name="Brettin T."/>
            <person name="Detter J.C."/>
            <person name="Han C."/>
            <person name="Kuske C.R."/>
            <person name="Schmutz J."/>
            <person name="Larimer F."/>
            <person name="Land M."/>
            <person name="Hauser L."/>
            <person name="Kyrpides N."/>
            <person name="Mikhailova N."/>
            <person name="Biddle J.F."/>
            <person name="Zhang Z."/>
            <person name="Fitz-Gibbon S.T."/>
            <person name="Lowe T.M."/>
            <person name="Saltikov C."/>
            <person name="House C.H."/>
            <person name="Richardson P."/>
        </authorList>
    </citation>
    <scope>NUCLEOTIDE SEQUENCE [LARGE SCALE GENOMIC DNA]</scope>
    <source>
        <strain>DSM 2338 / JCM 9278 / NBRC 100436 / V24Sta</strain>
    </source>
</reference>
<feature type="chain" id="PRO_1000099304" description="Polyamine aminopropyltransferase">
    <location>
        <begin position="1"/>
        <end position="291"/>
    </location>
</feature>
<feature type="domain" description="PABS" evidence="1">
    <location>
        <begin position="5"/>
        <end position="245"/>
    </location>
</feature>
<feature type="active site" description="Proton acceptor" evidence="1">
    <location>
        <position position="164"/>
    </location>
</feature>
<feature type="binding site" evidence="1">
    <location>
        <position position="36"/>
    </location>
    <ligand>
        <name>S-methyl-5'-thioadenosine</name>
        <dbReference type="ChEBI" id="CHEBI:17509"/>
    </ligand>
</feature>
<feature type="binding site" evidence="1">
    <location>
        <position position="67"/>
    </location>
    <ligand>
        <name>spermidine</name>
        <dbReference type="ChEBI" id="CHEBI:57834"/>
    </ligand>
</feature>
<feature type="binding site" evidence="1">
    <location>
        <position position="91"/>
    </location>
    <ligand>
        <name>spermidine</name>
        <dbReference type="ChEBI" id="CHEBI:57834"/>
    </ligand>
</feature>
<feature type="binding site" evidence="1">
    <location>
        <position position="111"/>
    </location>
    <ligand>
        <name>S-methyl-5'-thioadenosine</name>
        <dbReference type="ChEBI" id="CHEBI:17509"/>
    </ligand>
</feature>
<feature type="binding site" evidence="1">
    <location>
        <begin position="143"/>
        <end position="144"/>
    </location>
    <ligand>
        <name>S-methyl-5'-thioadenosine</name>
        <dbReference type="ChEBI" id="CHEBI:17509"/>
    </ligand>
</feature>
<name>SPEE_PYRNV</name>
<comment type="function">
    <text evidence="1">Catalyzes the irreversible transfer of a propylamine group from the amino donor S-adenosylmethioninamine (decarboxy-AdoMet) to putrescine (1,4-diaminobutane) to yield spermidine.</text>
</comment>
<comment type="catalytic activity">
    <reaction evidence="1">
        <text>S-adenosyl 3-(methylsulfanyl)propylamine + putrescine = S-methyl-5'-thioadenosine + spermidine + H(+)</text>
        <dbReference type="Rhea" id="RHEA:12721"/>
        <dbReference type="ChEBI" id="CHEBI:15378"/>
        <dbReference type="ChEBI" id="CHEBI:17509"/>
        <dbReference type="ChEBI" id="CHEBI:57443"/>
        <dbReference type="ChEBI" id="CHEBI:57834"/>
        <dbReference type="ChEBI" id="CHEBI:326268"/>
        <dbReference type="EC" id="2.5.1.16"/>
    </reaction>
</comment>
<comment type="pathway">
    <text evidence="1">Amine and polyamine biosynthesis; spermidine biosynthesis; spermidine from putrescine: step 1/1.</text>
</comment>
<comment type="subunit">
    <text evidence="1">Homodimer or homotetramer.</text>
</comment>
<comment type="subcellular location">
    <subcellularLocation>
        <location evidence="1">Cytoplasm</location>
    </subcellularLocation>
</comment>
<comment type="similarity">
    <text evidence="1">Belongs to the spermidine/spermine synthase family.</text>
</comment>